<dbReference type="EMBL" id="BA000031">
    <property type="protein sequence ID" value="BAC59137.1"/>
    <property type="molecule type" value="Genomic_DNA"/>
</dbReference>
<dbReference type="RefSeq" id="NP_797253.1">
    <property type="nucleotide sequence ID" value="NC_004603.1"/>
</dbReference>
<dbReference type="RefSeq" id="WP_011105734.1">
    <property type="nucleotide sequence ID" value="NC_004603.1"/>
</dbReference>
<dbReference type="SMR" id="Q87RC3"/>
<dbReference type="GeneID" id="1188371"/>
<dbReference type="KEGG" id="vpa:VP0874"/>
<dbReference type="PATRIC" id="fig|223926.6.peg.827"/>
<dbReference type="eggNOG" id="COG0850">
    <property type="taxonomic scope" value="Bacteria"/>
</dbReference>
<dbReference type="HOGENOM" id="CLU_067812_0_1_6"/>
<dbReference type="Proteomes" id="UP000002493">
    <property type="component" value="Chromosome 1"/>
</dbReference>
<dbReference type="GO" id="GO:0000902">
    <property type="term" value="P:cell morphogenesis"/>
    <property type="evidence" value="ECO:0007669"/>
    <property type="project" value="InterPro"/>
</dbReference>
<dbReference type="GO" id="GO:0000917">
    <property type="term" value="P:division septum assembly"/>
    <property type="evidence" value="ECO:0007669"/>
    <property type="project" value="UniProtKB-KW"/>
</dbReference>
<dbReference type="GO" id="GO:0051302">
    <property type="term" value="P:regulation of cell division"/>
    <property type="evidence" value="ECO:0007669"/>
    <property type="project" value="InterPro"/>
</dbReference>
<dbReference type="GO" id="GO:1901891">
    <property type="term" value="P:regulation of cell septum assembly"/>
    <property type="evidence" value="ECO:0007669"/>
    <property type="project" value="InterPro"/>
</dbReference>
<dbReference type="Gene3D" id="2.160.20.70">
    <property type="match status" value="1"/>
</dbReference>
<dbReference type="Gene3D" id="3.30.70.260">
    <property type="match status" value="1"/>
</dbReference>
<dbReference type="HAMAP" id="MF_00267">
    <property type="entry name" value="MinC"/>
    <property type="match status" value="1"/>
</dbReference>
<dbReference type="InterPro" id="IPR016098">
    <property type="entry name" value="CAP/MinC_C"/>
</dbReference>
<dbReference type="InterPro" id="IPR013033">
    <property type="entry name" value="MinC"/>
</dbReference>
<dbReference type="InterPro" id="IPR036145">
    <property type="entry name" value="MinC_C_sf"/>
</dbReference>
<dbReference type="InterPro" id="IPR007874">
    <property type="entry name" value="MinC_N"/>
</dbReference>
<dbReference type="InterPro" id="IPR005526">
    <property type="entry name" value="Septum_form_inhib_MinC_C"/>
</dbReference>
<dbReference type="NCBIfam" id="TIGR01222">
    <property type="entry name" value="minC"/>
    <property type="match status" value="1"/>
</dbReference>
<dbReference type="PANTHER" id="PTHR34108">
    <property type="entry name" value="SEPTUM SITE-DETERMINING PROTEIN MINC"/>
    <property type="match status" value="1"/>
</dbReference>
<dbReference type="PANTHER" id="PTHR34108:SF1">
    <property type="entry name" value="SEPTUM SITE-DETERMINING PROTEIN MINC"/>
    <property type="match status" value="1"/>
</dbReference>
<dbReference type="Pfam" id="PF03775">
    <property type="entry name" value="MinC_C"/>
    <property type="match status" value="1"/>
</dbReference>
<dbReference type="Pfam" id="PF05209">
    <property type="entry name" value="MinC_N"/>
    <property type="match status" value="1"/>
</dbReference>
<dbReference type="SUPFAM" id="SSF63848">
    <property type="entry name" value="Cell-division inhibitor MinC, C-terminal domain"/>
    <property type="match status" value="1"/>
</dbReference>
<name>MINC_VIBPA</name>
<gene>
    <name evidence="1" type="primary">minC</name>
    <name type="ordered locus">VP0874</name>
</gene>
<feature type="chain" id="PRO_0000189069" description="Probable septum site-determining protein MinC">
    <location>
        <begin position="1"/>
        <end position="220"/>
    </location>
</feature>
<comment type="function">
    <text evidence="1">Cell division inhibitor that blocks the formation of polar Z ring septums. Rapidly oscillates between the poles of the cell to destabilize FtsZ filaments that have formed before they mature into polar Z rings. Prevents FtsZ polymerization.</text>
</comment>
<comment type="subunit">
    <text evidence="1">Interacts with MinD and FtsZ.</text>
</comment>
<comment type="similarity">
    <text evidence="1">Belongs to the MinC family.</text>
</comment>
<proteinExistence type="inferred from homology"/>
<organism>
    <name type="scientific">Vibrio parahaemolyticus serotype O3:K6 (strain RIMD 2210633)</name>
    <dbReference type="NCBI Taxonomy" id="223926"/>
    <lineage>
        <taxon>Bacteria</taxon>
        <taxon>Pseudomonadati</taxon>
        <taxon>Pseudomonadota</taxon>
        <taxon>Gammaproteobacteria</taxon>
        <taxon>Vibrionales</taxon>
        <taxon>Vibrionaceae</taxon>
        <taxon>Vibrio</taxon>
    </lineage>
</organism>
<keyword id="KW-0131">Cell cycle</keyword>
<keyword id="KW-0132">Cell division</keyword>
<keyword id="KW-0717">Septation</keyword>
<reference key="1">
    <citation type="journal article" date="2003" name="Lancet">
        <title>Genome sequence of Vibrio parahaemolyticus: a pathogenic mechanism distinct from that of V. cholerae.</title>
        <authorList>
            <person name="Makino K."/>
            <person name="Oshima K."/>
            <person name="Kurokawa K."/>
            <person name="Yokoyama K."/>
            <person name="Uda T."/>
            <person name="Tagomori K."/>
            <person name="Iijima Y."/>
            <person name="Najima M."/>
            <person name="Nakano M."/>
            <person name="Yamashita A."/>
            <person name="Kubota Y."/>
            <person name="Kimura S."/>
            <person name="Yasunaga T."/>
            <person name="Honda T."/>
            <person name="Shinagawa H."/>
            <person name="Hattori M."/>
            <person name="Iida T."/>
        </authorList>
    </citation>
    <scope>NUCLEOTIDE SEQUENCE [LARGE SCALE GENOMIC DNA]</scope>
    <source>
        <strain>RIMD 2210633</strain>
    </source>
</reference>
<evidence type="ECO:0000255" key="1">
    <source>
        <dbReference type="HAMAP-Rule" id="MF_00267"/>
    </source>
</evidence>
<accession>Q87RC3</accession>
<sequence length="220" mass="23401">MTHSPDLKGSSFTLSVLHLSDNEIANTVEFLQEKVSQAPSFFASAPLVINIAKVQGDIDFPALKQGIADAGFIPVGITGSKDKRVQNLASEAGFAIMSASKSPSQAPAKMAPTKVVRTPVRSGQQIYAKDGDLVVLAHVSAGAEVIADGSIHIHGTLRGRAIAGASGQQEARIICHDLQAELVSIAGDYWLSDQIESEYWQKKVMISKAEESLHLEVLAI</sequence>
<protein>
    <recommendedName>
        <fullName evidence="1">Probable septum site-determining protein MinC</fullName>
    </recommendedName>
</protein>